<keyword id="KW-1185">Reference proteome</keyword>
<evidence type="ECO:0000255" key="1">
    <source>
        <dbReference type="HAMAP-Rule" id="MF_01448"/>
    </source>
</evidence>
<dbReference type="EMBL" id="CP000673">
    <property type="protein sequence ID" value="EDK33369.1"/>
    <property type="molecule type" value="Genomic_DNA"/>
</dbReference>
<dbReference type="RefSeq" id="WP_012101714.1">
    <property type="nucleotide sequence ID" value="NC_009706.1"/>
</dbReference>
<dbReference type="STRING" id="431943.CKL_1327"/>
<dbReference type="KEGG" id="ckl:CKL_1327"/>
<dbReference type="eggNOG" id="COG3906">
    <property type="taxonomic scope" value="Bacteria"/>
</dbReference>
<dbReference type="HOGENOM" id="CLU_146610_8_0_9"/>
<dbReference type="Proteomes" id="UP000002411">
    <property type="component" value="Chromosome"/>
</dbReference>
<dbReference type="HAMAP" id="MF_01448">
    <property type="entry name" value="UPF0473"/>
    <property type="match status" value="1"/>
</dbReference>
<dbReference type="InterPro" id="IPR009711">
    <property type="entry name" value="UPF0473"/>
</dbReference>
<dbReference type="Pfam" id="PF06949">
    <property type="entry name" value="DUF1292"/>
    <property type="match status" value="1"/>
</dbReference>
<comment type="similarity">
    <text evidence="1">Belongs to the UPF0473 family.</text>
</comment>
<reference key="1">
    <citation type="journal article" date="2008" name="Proc. Natl. Acad. Sci. U.S.A.">
        <title>The genome of Clostridium kluyveri, a strict anaerobe with unique metabolic features.</title>
        <authorList>
            <person name="Seedorf H."/>
            <person name="Fricke W.F."/>
            <person name="Veith B."/>
            <person name="Brueggemann H."/>
            <person name="Liesegang H."/>
            <person name="Strittmatter A."/>
            <person name="Miethke M."/>
            <person name="Buckel W."/>
            <person name="Hinderberger J."/>
            <person name="Li F."/>
            <person name="Hagemeier C."/>
            <person name="Thauer R.K."/>
            <person name="Gottschalk G."/>
        </authorList>
    </citation>
    <scope>NUCLEOTIDE SEQUENCE [LARGE SCALE GENOMIC DNA]</scope>
    <source>
        <strain>ATCC 8527 / DSM 555 / NBRC 12016 / NCIMB 10680 / K1</strain>
    </source>
</reference>
<name>Y1327_CLOK5</name>
<proteinExistence type="inferred from homology"/>
<gene>
    <name type="ordered locus">CKL_1327</name>
</gene>
<protein>
    <recommendedName>
        <fullName evidence="1">UPF0473 protein CKL_1327</fullName>
    </recommendedName>
</protein>
<feature type="chain" id="PRO_1000087501" description="UPF0473 protein CKL_1327">
    <location>
        <begin position="1"/>
        <end position="84"/>
    </location>
</feature>
<sequence length="84" mass="9737">MENDVSSLMLEDEKGDKVKFQVVTKFDIEDREYIIVVPEENEDSKEAIVLKIVEGEDGREAFITVEDDEEFNQVSEVYEALFND</sequence>
<accession>A5N7T8</accession>
<organism>
    <name type="scientific">Clostridium kluyveri (strain ATCC 8527 / DSM 555 / NBRC 12016 / NCIMB 10680 / K1)</name>
    <dbReference type="NCBI Taxonomy" id="431943"/>
    <lineage>
        <taxon>Bacteria</taxon>
        <taxon>Bacillati</taxon>
        <taxon>Bacillota</taxon>
        <taxon>Clostridia</taxon>
        <taxon>Eubacteriales</taxon>
        <taxon>Clostridiaceae</taxon>
        <taxon>Clostridium</taxon>
    </lineage>
</organism>